<gene>
    <name evidence="8" type="primary">LECRK2</name>
    <name evidence="10" type="ORF">H0512B01.10</name>
    <name evidence="11" type="ORF">OsI_14842</name>
</gene>
<evidence type="ECO:0000255" key="1"/>
<evidence type="ECO:0000255" key="2">
    <source>
        <dbReference type="PROSITE-ProRule" id="PRU00038"/>
    </source>
</evidence>
<evidence type="ECO:0000255" key="3">
    <source>
        <dbReference type="PROSITE-ProRule" id="PRU00076"/>
    </source>
</evidence>
<evidence type="ECO:0000255" key="4">
    <source>
        <dbReference type="PROSITE-ProRule" id="PRU00159"/>
    </source>
</evidence>
<evidence type="ECO:0000255" key="5">
    <source>
        <dbReference type="PROSITE-ProRule" id="PRU00315"/>
    </source>
</evidence>
<evidence type="ECO:0000255" key="6">
    <source>
        <dbReference type="PROSITE-ProRule" id="PRU00498"/>
    </source>
</evidence>
<evidence type="ECO:0000269" key="7">
    <source>
    </source>
</evidence>
<evidence type="ECO:0000303" key="8">
    <source>
    </source>
</evidence>
<evidence type="ECO:0000305" key="9"/>
<evidence type="ECO:0000312" key="10">
    <source>
        <dbReference type="EMBL" id="CAH67715.1"/>
    </source>
</evidence>
<evidence type="ECO:0000312" key="11">
    <source>
        <dbReference type="EMBL" id="EAY93043.1"/>
    </source>
</evidence>
<name>LERK2_ORYSI</name>
<comment type="function">
    <text evidence="7">Involved in resistance against the herbivorous insect brown planthopper (N.lugens, BPH). Member of the BPH3 (BPH resistance locus 3) cluster which contains LECRK1, LECRK2 and LECRK3.</text>
</comment>
<comment type="catalytic activity">
    <reaction evidence="9">
        <text>L-seryl-[protein] + ATP = O-phospho-L-seryl-[protein] + ADP + H(+)</text>
        <dbReference type="Rhea" id="RHEA:17989"/>
        <dbReference type="Rhea" id="RHEA-COMP:9863"/>
        <dbReference type="Rhea" id="RHEA-COMP:11604"/>
        <dbReference type="ChEBI" id="CHEBI:15378"/>
        <dbReference type="ChEBI" id="CHEBI:29999"/>
        <dbReference type="ChEBI" id="CHEBI:30616"/>
        <dbReference type="ChEBI" id="CHEBI:83421"/>
        <dbReference type="ChEBI" id="CHEBI:456216"/>
        <dbReference type="EC" id="2.7.11.1"/>
    </reaction>
</comment>
<comment type="catalytic activity">
    <reaction evidence="9">
        <text>L-threonyl-[protein] + ATP = O-phospho-L-threonyl-[protein] + ADP + H(+)</text>
        <dbReference type="Rhea" id="RHEA:46608"/>
        <dbReference type="Rhea" id="RHEA-COMP:11060"/>
        <dbReference type="Rhea" id="RHEA-COMP:11605"/>
        <dbReference type="ChEBI" id="CHEBI:15378"/>
        <dbReference type="ChEBI" id="CHEBI:30013"/>
        <dbReference type="ChEBI" id="CHEBI:30616"/>
        <dbReference type="ChEBI" id="CHEBI:61977"/>
        <dbReference type="ChEBI" id="CHEBI:456216"/>
        <dbReference type="EC" id="2.7.11.1"/>
    </reaction>
</comment>
<comment type="subcellular location">
    <subcellularLocation>
        <location evidence="1">Membrane</location>
        <topology evidence="1">Single-pass type I membrane protein</topology>
    </subcellularLocation>
</comment>
<comment type="similarity">
    <text evidence="4">Belongs to the protein kinase superfamily. Ser/Thr protein kinase family.</text>
</comment>
<proteinExistence type="evidence at transcript level"/>
<organism>
    <name type="scientific">Oryza sativa subsp. indica</name>
    <name type="common">Rice</name>
    <dbReference type="NCBI Taxonomy" id="39946"/>
    <lineage>
        <taxon>Eukaryota</taxon>
        <taxon>Viridiplantae</taxon>
        <taxon>Streptophyta</taxon>
        <taxon>Embryophyta</taxon>
        <taxon>Tracheophyta</taxon>
        <taxon>Spermatophyta</taxon>
        <taxon>Magnoliopsida</taxon>
        <taxon>Liliopsida</taxon>
        <taxon>Poales</taxon>
        <taxon>Poaceae</taxon>
        <taxon>BOP clade</taxon>
        <taxon>Oryzoideae</taxon>
        <taxon>Oryzeae</taxon>
        <taxon>Oryzinae</taxon>
        <taxon>Oryza</taxon>
        <taxon>Oryza sativa</taxon>
    </lineage>
</organism>
<keyword id="KW-0067">ATP-binding</keyword>
<keyword id="KW-1015">Disulfide bond</keyword>
<keyword id="KW-0245">EGF-like domain</keyword>
<keyword id="KW-0325">Glycoprotein</keyword>
<keyword id="KW-0418">Kinase</keyword>
<keyword id="KW-0430">Lectin</keyword>
<keyword id="KW-0472">Membrane</keyword>
<keyword id="KW-0547">Nucleotide-binding</keyword>
<keyword id="KW-0611">Plant defense</keyword>
<keyword id="KW-0675">Receptor</keyword>
<keyword id="KW-1185">Reference proteome</keyword>
<keyword id="KW-0723">Serine/threonine-protein kinase</keyword>
<keyword id="KW-0732">Signal</keyword>
<keyword id="KW-0808">Transferase</keyword>
<keyword id="KW-0812">Transmembrane</keyword>
<keyword id="KW-1133">Transmembrane helix</keyword>
<dbReference type="EC" id="2.7.11.1" evidence="9"/>
<dbReference type="EMBL" id="KF748965">
    <property type="protein sequence ID" value="AIE56230.1"/>
    <property type="molecule type" value="Genomic_DNA"/>
</dbReference>
<dbReference type="EMBL" id="KF748966">
    <property type="protein sequence ID" value="AIE56231.1"/>
    <property type="molecule type" value="Genomic_DNA"/>
</dbReference>
<dbReference type="EMBL" id="KF748967">
    <property type="protein sequence ID" value="AIE56232.1"/>
    <property type="molecule type" value="Genomic_DNA"/>
</dbReference>
<dbReference type="EMBL" id="KF748968">
    <property type="protein sequence ID" value="AIE56233.1"/>
    <property type="molecule type" value="Genomic_DNA"/>
</dbReference>
<dbReference type="EMBL" id="KF748969">
    <property type="protein sequence ID" value="AIE56234.1"/>
    <property type="molecule type" value="Genomic_DNA"/>
</dbReference>
<dbReference type="EMBL" id="KF748970">
    <property type="protein sequence ID" value="AIE56235.1"/>
    <property type="molecule type" value="Genomic_DNA"/>
</dbReference>
<dbReference type="EMBL" id="AL442110">
    <property type="protein sequence ID" value="CAH67715.1"/>
    <property type="molecule type" value="Genomic_DNA"/>
</dbReference>
<dbReference type="EMBL" id="KF748971">
    <property type="protein sequence ID" value="AIE56236.1"/>
    <property type="molecule type" value="Genomic_DNA"/>
</dbReference>
<dbReference type="EMBL" id="CM000129">
    <property type="protein sequence ID" value="EAY93043.1"/>
    <property type="molecule type" value="Genomic_DNA"/>
</dbReference>
<dbReference type="EMBL" id="EF576342">
    <property type="protein sequence ID" value="ABR25930.1"/>
    <property type="molecule type" value="mRNA"/>
</dbReference>
<dbReference type="SMR" id="A2XQD3"/>
<dbReference type="STRING" id="39946.A2XQD3"/>
<dbReference type="GlyCosmos" id="A2XQD3">
    <property type="glycosylation" value="8 sites, No reported glycans"/>
</dbReference>
<dbReference type="EnsemblPlants" id="BGIOSGA015600-TA">
    <property type="protein sequence ID" value="BGIOSGA015600-PA"/>
    <property type="gene ID" value="BGIOSGA015600"/>
</dbReference>
<dbReference type="EnsemblPlants" id="OsKYG_04g0004300.01">
    <property type="protein sequence ID" value="OsKYG_04g0004300.01"/>
    <property type="gene ID" value="OsKYG_04g0004300"/>
</dbReference>
<dbReference type="EnsemblPlants" id="OsLaMu_04g0004150.01">
    <property type="protein sequence ID" value="OsLaMu_04g0004150.01"/>
    <property type="gene ID" value="OsLaMu_04g0004150"/>
</dbReference>
<dbReference type="EnsemblPlants" id="OsMH63_04G004270_01">
    <property type="protein sequence ID" value="OsMH63_04G004270_01"/>
    <property type="gene ID" value="OsMH63_04G004270"/>
</dbReference>
<dbReference type="EnsemblPlants" id="OsPr106_04g0004120.01">
    <property type="protein sequence ID" value="OsPr106_04g0004120.01"/>
    <property type="gene ID" value="OsPr106_04g0004120"/>
</dbReference>
<dbReference type="EnsemblPlants" id="OsZS97_04G004220_01">
    <property type="protein sequence ID" value="OsZS97_04G004220_01"/>
    <property type="gene ID" value="OsZS97_04G004220"/>
</dbReference>
<dbReference type="Gramene" id="BGIOSGA015600-TA">
    <property type="protein sequence ID" value="BGIOSGA015600-PA"/>
    <property type="gene ID" value="BGIOSGA015600"/>
</dbReference>
<dbReference type="Gramene" id="OsKYG_04g0004300.01">
    <property type="protein sequence ID" value="OsKYG_04g0004300.01"/>
    <property type="gene ID" value="OsKYG_04g0004300"/>
</dbReference>
<dbReference type="Gramene" id="OsLaMu_04g0004150.01">
    <property type="protein sequence ID" value="OsLaMu_04g0004150.01"/>
    <property type="gene ID" value="OsLaMu_04g0004150"/>
</dbReference>
<dbReference type="Gramene" id="OsMH63_04G004270_01">
    <property type="protein sequence ID" value="OsMH63_04G004270_01"/>
    <property type="gene ID" value="OsMH63_04G004270"/>
</dbReference>
<dbReference type="Gramene" id="OsPr106_04g0004120.01">
    <property type="protein sequence ID" value="OsPr106_04g0004120.01"/>
    <property type="gene ID" value="OsPr106_04g0004120"/>
</dbReference>
<dbReference type="Gramene" id="OsZS97_04G004220_01">
    <property type="protein sequence ID" value="OsZS97_04G004220_01"/>
    <property type="gene ID" value="OsZS97_04G004220"/>
</dbReference>
<dbReference type="HOGENOM" id="CLU_000288_116_2_1"/>
<dbReference type="OMA" id="VIWYAKT"/>
<dbReference type="Proteomes" id="UP000007015">
    <property type="component" value="Chromosome 4"/>
</dbReference>
<dbReference type="GO" id="GO:0016020">
    <property type="term" value="C:membrane"/>
    <property type="evidence" value="ECO:0007669"/>
    <property type="project" value="UniProtKB-SubCell"/>
</dbReference>
<dbReference type="GO" id="GO:0005524">
    <property type="term" value="F:ATP binding"/>
    <property type="evidence" value="ECO:0007669"/>
    <property type="project" value="UniProtKB-KW"/>
</dbReference>
<dbReference type="GO" id="GO:0030246">
    <property type="term" value="F:carbohydrate binding"/>
    <property type="evidence" value="ECO:0007669"/>
    <property type="project" value="UniProtKB-KW"/>
</dbReference>
<dbReference type="GO" id="GO:0106310">
    <property type="term" value="F:protein serine kinase activity"/>
    <property type="evidence" value="ECO:0007669"/>
    <property type="project" value="RHEA"/>
</dbReference>
<dbReference type="GO" id="GO:0004674">
    <property type="term" value="F:protein serine/threonine kinase activity"/>
    <property type="evidence" value="ECO:0007669"/>
    <property type="project" value="UniProtKB-KW"/>
</dbReference>
<dbReference type="GO" id="GO:0006952">
    <property type="term" value="P:defense response"/>
    <property type="evidence" value="ECO:0007669"/>
    <property type="project" value="UniProtKB-KW"/>
</dbReference>
<dbReference type="GO" id="GO:0051707">
    <property type="term" value="P:response to other organism"/>
    <property type="evidence" value="ECO:0007669"/>
    <property type="project" value="UniProtKB-ARBA"/>
</dbReference>
<dbReference type="CDD" id="cd01098">
    <property type="entry name" value="PAN_AP_plant"/>
    <property type="match status" value="1"/>
</dbReference>
<dbReference type="FunFam" id="1.10.510.10:FF:000237">
    <property type="entry name" value="G-type lectin S-receptor-like serine/threonine-protein kinase"/>
    <property type="match status" value="1"/>
</dbReference>
<dbReference type="FunFam" id="3.30.200.20:FF:000059">
    <property type="entry name" value="S-receptor-like serine/threonine-protein kinase"/>
    <property type="match status" value="1"/>
</dbReference>
<dbReference type="FunFam" id="2.90.10.10:FF:000006">
    <property type="entry name" value="Serine/threonine-protein kinase"/>
    <property type="match status" value="1"/>
</dbReference>
<dbReference type="FunFam" id="2.90.10.30:FF:000001">
    <property type="entry name" value="Serine/threonine-protein kinase"/>
    <property type="match status" value="1"/>
</dbReference>
<dbReference type="Gene3D" id="2.90.10.30">
    <property type="match status" value="1"/>
</dbReference>
<dbReference type="Gene3D" id="2.90.10.10">
    <property type="entry name" value="Bulb-type lectin domain"/>
    <property type="match status" value="1"/>
</dbReference>
<dbReference type="Gene3D" id="3.30.200.20">
    <property type="entry name" value="Phosphorylase Kinase, domain 1"/>
    <property type="match status" value="1"/>
</dbReference>
<dbReference type="Gene3D" id="1.10.510.10">
    <property type="entry name" value="Transferase(Phosphotransferase) domain 1"/>
    <property type="match status" value="1"/>
</dbReference>
<dbReference type="InterPro" id="IPR001480">
    <property type="entry name" value="Bulb-type_lectin_dom"/>
</dbReference>
<dbReference type="InterPro" id="IPR036426">
    <property type="entry name" value="Bulb-type_lectin_dom_sf"/>
</dbReference>
<dbReference type="InterPro" id="IPR051343">
    <property type="entry name" value="G-type_lectin_kinases/EP1-like"/>
</dbReference>
<dbReference type="InterPro" id="IPR011009">
    <property type="entry name" value="Kinase-like_dom_sf"/>
</dbReference>
<dbReference type="InterPro" id="IPR000719">
    <property type="entry name" value="Prot_kinase_dom"/>
</dbReference>
<dbReference type="InterPro" id="IPR017441">
    <property type="entry name" value="Protein_kinase_ATP_BS"/>
</dbReference>
<dbReference type="InterPro" id="IPR008271">
    <property type="entry name" value="Ser/Thr_kinase_AS"/>
</dbReference>
<dbReference type="InterPro" id="IPR024171">
    <property type="entry name" value="SRK-like_kinase"/>
</dbReference>
<dbReference type="PANTHER" id="PTHR47976">
    <property type="entry name" value="G-TYPE LECTIN S-RECEPTOR-LIKE SERINE/THREONINE-PROTEIN KINASE SD2-5"/>
    <property type="match status" value="1"/>
</dbReference>
<dbReference type="PANTHER" id="PTHR47976:SF89">
    <property type="entry name" value="G-TYPE LECTIN S-RECEPTOR-LIKE SERINE_THREONINE-PROTEIN KINASE LECRK3"/>
    <property type="match status" value="1"/>
</dbReference>
<dbReference type="Pfam" id="PF00069">
    <property type="entry name" value="Pkinase"/>
    <property type="match status" value="1"/>
</dbReference>
<dbReference type="PIRSF" id="PIRSF000641">
    <property type="entry name" value="SRK"/>
    <property type="match status" value="1"/>
</dbReference>
<dbReference type="SMART" id="SM00108">
    <property type="entry name" value="B_lectin"/>
    <property type="match status" value="1"/>
</dbReference>
<dbReference type="SMART" id="SM00220">
    <property type="entry name" value="S_TKc"/>
    <property type="match status" value="1"/>
</dbReference>
<dbReference type="SUPFAM" id="SSF51110">
    <property type="entry name" value="alpha-D-mannose-specific plant lectins"/>
    <property type="match status" value="2"/>
</dbReference>
<dbReference type="SUPFAM" id="SSF56112">
    <property type="entry name" value="Protein kinase-like (PK-like)"/>
    <property type="match status" value="1"/>
</dbReference>
<dbReference type="PROSITE" id="PS50927">
    <property type="entry name" value="BULB_LECTIN"/>
    <property type="match status" value="1"/>
</dbReference>
<dbReference type="PROSITE" id="PS00107">
    <property type="entry name" value="PROTEIN_KINASE_ATP"/>
    <property type="match status" value="1"/>
</dbReference>
<dbReference type="PROSITE" id="PS50011">
    <property type="entry name" value="PROTEIN_KINASE_DOM"/>
    <property type="match status" value="1"/>
</dbReference>
<dbReference type="PROSITE" id="PS00108">
    <property type="entry name" value="PROTEIN_KINASE_ST"/>
    <property type="match status" value="1"/>
</dbReference>
<reference key="1">
    <citation type="journal article" date="2015" name="Nat. Biotechnol.">
        <title>A gene cluster encoding lectin receptor kinases confers broad-spectrum and durable insect resistance in rice.</title>
        <authorList>
            <person name="Liu Y."/>
            <person name="Wu H."/>
            <person name="Chen H."/>
            <person name="Liu Y."/>
            <person name="He J."/>
            <person name="Kang H."/>
            <person name="Sun Z."/>
            <person name="Pan G."/>
            <person name="Wang Q."/>
            <person name="Hu J."/>
            <person name="Zhou F."/>
            <person name="Zhou K."/>
            <person name="Zheng X."/>
            <person name="Ren Y."/>
            <person name="Chen L."/>
            <person name="Wang Y."/>
            <person name="Zhao Z."/>
            <person name="Lin Q."/>
            <person name="Wu F."/>
            <person name="Zhang X."/>
            <person name="Guo X."/>
            <person name="Cheng X."/>
            <person name="Jiang L."/>
            <person name="Wu C."/>
            <person name="Wang H."/>
            <person name="Wan J."/>
        </authorList>
    </citation>
    <scope>NUCLEOTIDE SEQUENCE [GENOMIC DNA]</scope>
    <scope>FUNCTION</scope>
</reference>
<reference key="2">
    <citation type="journal article" date="2002" name="Nature">
        <title>Sequence and analysis of rice chromosome 4.</title>
        <authorList>
            <person name="Feng Q."/>
            <person name="Zhang Y."/>
            <person name="Hao P."/>
            <person name="Wang S."/>
            <person name="Fu G."/>
            <person name="Huang Y."/>
            <person name="Li Y."/>
            <person name="Zhu J."/>
            <person name="Liu Y."/>
            <person name="Hu X."/>
            <person name="Jia P."/>
            <person name="Zhang Y."/>
            <person name="Zhao Q."/>
            <person name="Ying K."/>
            <person name="Yu S."/>
            <person name="Tang Y."/>
            <person name="Weng Q."/>
            <person name="Zhang L."/>
            <person name="Lu Y."/>
            <person name="Mu J."/>
            <person name="Lu Y."/>
            <person name="Zhang L.S."/>
            <person name="Yu Z."/>
            <person name="Fan D."/>
            <person name="Liu X."/>
            <person name="Lu T."/>
            <person name="Li C."/>
            <person name="Wu Y."/>
            <person name="Sun T."/>
            <person name="Lei H."/>
            <person name="Li T."/>
            <person name="Hu H."/>
            <person name="Guan J."/>
            <person name="Wu M."/>
            <person name="Zhang R."/>
            <person name="Zhou B."/>
            <person name="Chen Z."/>
            <person name="Chen L."/>
            <person name="Jin Z."/>
            <person name="Wang R."/>
            <person name="Yin H."/>
            <person name="Cai Z."/>
            <person name="Ren S."/>
            <person name="Lv G."/>
            <person name="Gu W."/>
            <person name="Zhu G."/>
            <person name="Tu Y."/>
            <person name="Jia J."/>
            <person name="Zhang Y."/>
            <person name="Chen J."/>
            <person name="Kang H."/>
            <person name="Chen X."/>
            <person name="Shao C."/>
            <person name="Sun Y."/>
            <person name="Hu Q."/>
            <person name="Zhang X."/>
            <person name="Zhang W."/>
            <person name="Wang L."/>
            <person name="Ding C."/>
            <person name="Sheng H."/>
            <person name="Gu J."/>
            <person name="Chen S."/>
            <person name="Ni L."/>
            <person name="Zhu F."/>
            <person name="Chen W."/>
            <person name="Lan L."/>
            <person name="Lai Y."/>
            <person name="Cheng Z."/>
            <person name="Gu M."/>
            <person name="Jiang J."/>
            <person name="Li J."/>
            <person name="Hong G."/>
            <person name="Xue Y."/>
            <person name="Han B."/>
        </authorList>
    </citation>
    <scope>NUCLEOTIDE SEQUENCE [LARGE SCALE GENOMIC DNA]</scope>
    <source>
        <strain>cv. Guang-Lu-Ai No.4</strain>
    </source>
</reference>
<reference key="3">
    <citation type="journal article" date="2005" name="PLoS Biol.">
        <title>The genomes of Oryza sativa: a history of duplications.</title>
        <authorList>
            <person name="Yu J."/>
            <person name="Wang J."/>
            <person name="Lin W."/>
            <person name="Li S."/>
            <person name="Li H."/>
            <person name="Zhou J."/>
            <person name="Ni P."/>
            <person name="Dong W."/>
            <person name="Hu S."/>
            <person name="Zeng C."/>
            <person name="Zhang J."/>
            <person name="Zhang Y."/>
            <person name="Li R."/>
            <person name="Xu Z."/>
            <person name="Li S."/>
            <person name="Li X."/>
            <person name="Zheng H."/>
            <person name="Cong L."/>
            <person name="Lin L."/>
            <person name="Yin J."/>
            <person name="Geng J."/>
            <person name="Li G."/>
            <person name="Shi J."/>
            <person name="Liu J."/>
            <person name="Lv H."/>
            <person name="Li J."/>
            <person name="Wang J."/>
            <person name="Deng Y."/>
            <person name="Ran L."/>
            <person name="Shi X."/>
            <person name="Wang X."/>
            <person name="Wu Q."/>
            <person name="Li C."/>
            <person name="Ren X."/>
            <person name="Wang J."/>
            <person name="Wang X."/>
            <person name="Li D."/>
            <person name="Liu D."/>
            <person name="Zhang X."/>
            <person name="Ji Z."/>
            <person name="Zhao W."/>
            <person name="Sun Y."/>
            <person name="Zhang Z."/>
            <person name="Bao J."/>
            <person name="Han Y."/>
            <person name="Dong L."/>
            <person name="Ji J."/>
            <person name="Chen P."/>
            <person name="Wu S."/>
            <person name="Liu J."/>
            <person name="Xiao Y."/>
            <person name="Bu D."/>
            <person name="Tan J."/>
            <person name="Yang L."/>
            <person name="Ye C."/>
            <person name="Zhang J."/>
            <person name="Xu J."/>
            <person name="Zhou Y."/>
            <person name="Yu Y."/>
            <person name="Zhang B."/>
            <person name="Zhuang S."/>
            <person name="Wei H."/>
            <person name="Liu B."/>
            <person name="Lei M."/>
            <person name="Yu H."/>
            <person name="Li Y."/>
            <person name="Xu H."/>
            <person name="Wei S."/>
            <person name="He X."/>
            <person name="Fang L."/>
            <person name="Zhang Z."/>
            <person name="Zhang Y."/>
            <person name="Huang X."/>
            <person name="Su Z."/>
            <person name="Tong W."/>
            <person name="Li J."/>
            <person name="Tong Z."/>
            <person name="Li S."/>
            <person name="Ye J."/>
            <person name="Wang L."/>
            <person name="Fang L."/>
            <person name="Lei T."/>
            <person name="Chen C.-S."/>
            <person name="Chen H.-C."/>
            <person name="Xu Z."/>
            <person name="Li H."/>
            <person name="Huang H."/>
            <person name="Zhang F."/>
            <person name="Xu H."/>
            <person name="Li N."/>
            <person name="Zhao C."/>
            <person name="Li S."/>
            <person name="Dong L."/>
            <person name="Huang Y."/>
            <person name="Li L."/>
            <person name="Xi Y."/>
            <person name="Qi Q."/>
            <person name="Li W."/>
            <person name="Zhang B."/>
            <person name="Hu W."/>
            <person name="Zhang Y."/>
            <person name="Tian X."/>
            <person name="Jiao Y."/>
            <person name="Liang X."/>
            <person name="Jin J."/>
            <person name="Gao L."/>
            <person name="Zheng W."/>
            <person name="Hao B."/>
            <person name="Liu S.-M."/>
            <person name="Wang W."/>
            <person name="Yuan L."/>
            <person name="Cao M."/>
            <person name="McDermott J."/>
            <person name="Samudrala R."/>
            <person name="Wang J."/>
            <person name="Wong G.K.-S."/>
            <person name="Yang H."/>
        </authorList>
    </citation>
    <scope>NUCLEOTIDE SEQUENCE [LARGE SCALE GENOMIC DNA]</scope>
    <source>
        <strain>cv. 93-11</strain>
    </source>
</reference>
<reference key="4">
    <citation type="submission" date="2007-04" db="EMBL/GenBank/DDBJ databases">
        <title>A comparative transcriptome map of early and late salinity stress responses in contrasting genotypes of Oryza sativa L.</title>
        <authorList>
            <person name="Kumari S."/>
            <person name="Panjabi V."/>
            <person name="Singla-Pareek S.L."/>
            <person name="Sopory S.K."/>
            <person name="Pareek A."/>
        </authorList>
    </citation>
    <scope>NUCLEOTIDE SEQUENCE [LARGE SCALE MRNA] OF 141-448</scope>
    <source>
        <tissue>Shoot</tissue>
    </source>
</reference>
<sequence>MAPILFLPILQILLIYCTKSAQAQLNISIGSSLTPQEVNNSWISPSSDFAFGFRAVDGNSSSYLLAVWFNKIADKTVIWYAKTSSNGQDDTIPVQVQSGSVLKLADGALSLRDPSGNEVWNPRVTDVGYARMLNTGNFRLLGTDGATKWESFGDPSDTILPTQVLPLGTALHSRLLATDYSNGRFQLNVQDDGNLVLYLVAVPSAYYHDPYWASNTVGNGSQLVFNETGRIYFTLTNGSQINITSAGVDSMGDFFHRATLDTDGVFRQYIYPKSKQARSLWQEQWRAVDALPENICQTIQTKVGSGACGFNSYCTFDGTKNTTNCLCPQRYKFFDNERTYKGCRPDFEPQSCDLDETAAMVQYEMTPIDRINWPLSDYEQYSPIDETECRRLCVIDCFCSVAVFNKPSNTCYKKKLPLSNGNMDSSLQATVLLKVPRSTNSPSMISSGSSKWKKDKKYWILGSSLFFGSSVLVNFLLIFVLLFGTYCSITSRKKTQLSQLPSNSGLPSKIFTYRELEKATGGFHEVLGTGASGIVYKGQLQDECGTNIAVKKIEKLQQEAQKEFLVEVQTIGQTFHRNLVRLLGFCNEGTEKLLVYEFMSNGSLNTFLFNDTHPHWSLRVQVALGVSRGLLYLHEECNKQIIHCDMKPQNILLDDNFVAKISDFGLAKLLPVNQTQTNTGIRGTRGYVAPEWFKNIGITSKVDVYSFGVILLELVCCRKNVELEVADEEQTILTYWANDCYRCGRIDLLVAGDDEAIFNIKKVERFVAVALWCLQEEPSMRPTMHKVMQMLDGAVQIPTPPDPSSYISSLA</sequence>
<protein>
    <recommendedName>
        <fullName evidence="9">G-type lectin S-receptor-like serine/threonine-protein kinase LECRK2</fullName>
        <shortName evidence="8">OsLecRK2</shortName>
        <ecNumber evidence="9">2.7.11.1</ecNumber>
    </recommendedName>
</protein>
<accession>A2XQD3</accession>
<accession>A0A075F418</accession>
<accession>A6N110</accession>
<accession>Q25AF4</accession>
<feature type="signal peptide" evidence="1">
    <location>
        <begin position="1"/>
        <end position="23"/>
    </location>
</feature>
<feature type="chain" id="PRO_0000436168" description="G-type lectin S-receptor-like serine/threonine-protein kinase LECRK2" evidence="1">
    <location>
        <begin position="24"/>
        <end position="811"/>
    </location>
</feature>
<feature type="topological domain" description="Extracellular" evidence="9">
    <location>
        <begin position="24"/>
        <end position="464"/>
    </location>
</feature>
<feature type="transmembrane region" description="Helical" evidence="1">
    <location>
        <begin position="465"/>
        <end position="485"/>
    </location>
</feature>
<feature type="topological domain" description="Cytoplasmic" evidence="9">
    <location>
        <begin position="486"/>
        <end position="811"/>
    </location>
</feature>
<feature type="domain" description="Bulb-type lectin" evidence="2">
    <location>
        <begin position="24"/>
        <end position="153"/>
    </location>
</feature>
<feature type="domain" description="EGF-like; atypical" evidence="9">
    <location>
        <begin position="292"/>
        <end position="344"/>
    </location>
</feature>
<feature type="domain" description="PAN" evidence="5">
    <location>
        <begin position="352"/>
        <end position="436"/>
    </location>
</feature>
<feature type="domain" description="Protein kinase" evidence="4">
    <location>
        <begin position="521"/>
        <end position="795"/>
    </location>
</feature>
<feature type="active site" description="Proton acceptor" evidence="4">
    <location>
        <position position="645"/>
    </location>
</feature>
<feature type="binding site" evidence="4">
    <location>
        <begin position="527"/>
        <end position="535"/>
    </location>
    <ligand>
        <name>ATP</name>
        <dbReference type="ChEBI" id="CHEBI:30616"/>
    </ligand>
</feature>
<feature type="binding site" evidence="4">
    <location>
        <position position="551"/>
    </location>
    <ligand>
        <name>ATP</name>
        <dbReference type="ChEBI" id="CHEBI:30616"/>
    </ligand>
</feature>
<feature type="glycosylation site" description="N-linked (GlcNAc...) asparagine" evidence="6">
    <location>
        <position position="26"/>
    </location>
</feature>
<feature type="glycosylation site" description="N-linked (GlcNAc...) asparagine" evidence="6">
    <location>
        <position position="39"/>
    </location>
</feature>
<feature type="glycosylation site" description="N-linked (GlcNAc...) asparagine" evidence="6">
    <location>
        <position position="59"/>
    </location>
</feature>
<feature type="glycosylation site" description="N-linked (GlcNAc...) asparagine" evidence="6">
    <location>
        <position position="219"/>
    </location>
</feature>
<feature type="glycosylation site" description="N-linked (GlcNAc...) asparagine" evidence="6">
    <location>
        <position position="226"/>
    </location>
</feature>
<feature type="glycosylation site" description="N-linked (GlcNAc...) asparagine" evidence="6">
    <location>
        <position position="237"/>
    </location>
</feature>
<feature type="glycosylation site" description="N-linked (GlcNAc...) asparagine" evidence="6">
    <location>
        <position position="242"/>
    </location>
</feature>
<feature type="glycosylation site" description="N-linked (GlcNAc...) asparagine" evidence="6">
    <location>
        <position position="321"/>
    </location>
</feature>
<feature type="disulfide bond" evidence="3">
    <location>
        <begin position="296"/>
        <end position="314"/>
    </location>
</feature>
<feature type="disulfide bond" evidence="3">
    <location>
        <begin position="308"/>
        <end position="325"/>
    </location>
</feature>
<feature type="disulfide bond" evidence="3">
    <location>
        <begin position="327"/>
        <end position="343"/>
    </location>
</feature>
<feature type="disulfide bond" evidence="5">
    <location>
        <begin position="389"/>
        <end position="411"/>
    </location>
</feature>
<feature type="disulfide bond" evidence="5">
    <location>
        <begin position="393"/>
        <end position="399"/>
    </location>
</feature>
<feature type="sequence conflict" description="In Ref. 1; AIE56230/AIE56231/AIE56232/AIE56233/AIE56234/AIE56235/AIE56236." evidence="9" ref="1">
    <original>S</original>
    <variation>P</variation>
    <location>
        <position position="151"/>
    </location>
</feature>
<feature type="sequence conflict" description="In Ref. 2; CAH67715." evidence="9" ref="2">
    <original>R</original>
    <variation>K</variation>
    <location>
        <position position="286"/>
    </location>
</feature>
<feature type="sequence conflict" description="In Ref. 1; AIE56230/AIE56231/AIE56232/AIE56233/AIE56234/AIE56235/AIE56236." evidence="9" ref="1">
    <original>D</original>
    <variation>N</variation>
    <location>
        <position position="424"/>
    </location>
</feature>
<feature type="sequence conflict" description="In Ref. 2; CAH67715." evidence="9" ref="2">
    <original>N</original>
    <variation>K</variation>
    <location>
        <position position="695"/>
    </location>
</feature>
<feature type="sequence conflict" description="In Ref. 2; CAH67715." evidence="9" ref="2">
    <original>A</original>
    <variation>E</variation>
    <location>
        <position position="751"/>
    </location>
</feature>
<feature type="sequence conflict" description="In Ref. 1; AIE56230/AIE56231/AIE56232/AIE56233/AIE56234/AIE56235/AIE56236." evidence="9" ref="1">
    <original>F</original>
    <variation>L</variation>
    <location>
        <position position="758"/>
    </location>
</feature>